<protein>
    <recommendedName>
        <fullName>Suppressor-of-stellate-like protein</fullName>
        <shortName>Su(ste)-like</shortName>
        <shortName>Suste-like protein</shortName>
    </recommendedName>
</protein>
<feature type="chain" id="PRO_0000068269" description="Suppressor-of-stellate-like protein">
    <location>
        <begin position="1"/>
        <end position="219"/>
    </location>
</feature>
<feature type="region of interest" description="Disordered" evidence="1">
    <location>
        <begin position="194"/>
        <end position="219"/>
    </location>
</feature>
<feature type="compositionally biased region" description="Polar residues" evidence="1">
    <location>
        <begin position="204"/>
        <end position="219"/>
    </location>
</feature>
<feature type="sequence conflict" description="In Ref. 1; AAB65818." evidence="2" ref="1">
    <original>N</original>
    <variation>I</variation>
    <location>
        <position position="143"/>
    </location>
</feature>
<name>SSL_DROME</name>
<accession>Q24536</accession>
<accession>A4UZV0</accession>
<accession>Q24540</accession>
<accession>Q9W163</accession>
<comment type="similarity">
    <text evidence="2">Belongs to the casein kinase 2 subunit beta family.</text>
</comment>
<gene>
    <name type="primary">Ssl</name>
    <name type="ORF">CG13591</name>
</gene>
<keyword id="KW-1185">Reference proteome</keyword>
<evidence type="ECO:0000256" key="1">
    <source>
        <dbReference type="SAM" id="MobiDB-lite"/>
    </source>
</evidence>
<evidence type="ECO:0000305" key="2"/>
<organism>
    <name type="scientific">Drosophila melanogaster</name>
    <name type="common">Fruit fly</name>
    <dbReference type="NCBI Taxonomy" id="7227"/>
    <lineage>
        <taxon>Eukaryota</taxon>
        <taxon>Metazoa</taxon>
        <taxon>Ecdysozoa</taxon>
        <taxon>Arthropoda</taxon>
        <taxon>Hexapoda</taxon>
        <taxon>Insecta</taxon>
        <taxon>Pterygota</taxon>
        <taxon>Neoptera</taxon>
        <taxon>Endopterygota</taxon>
        <taxon>Diptera</taxon>
        <taxon>Brachycera</taxon>
        <taxon>Muscomorpha</taxon>
        <taxon>Ephydroidea</taxon>
        <taxon>Drosophilidae</taxon>
        <taxon>Drosophila</taxon>
        <taxon>Sophophora</taxon>
    </lineage>
</organism>
<reference key="1">
    <citation type="journal article" date="1997" name="Proc. Natl. Acad. Sci. U.S.A.">
        <title>Acquisition and amplification of a testis-expressed autosomal gene, SSL, by the Drosophila Y chromosome.</title>
        <authorList>
            <person name="Kalmykova A.I."/>
            <person name="Shevelyov Y.Y."/>
            <person name="Dobritsa A.A."/>
            <person name="Gvozdev V.A."/>
        </authorList>
    </citation>
    <scope>NUCLEOTIDE SEQUENCE [GENOMIC DNA / MRNA]</scope>
    <source>
        <strain>Batumi</strain>
        <strain>Canton-S</strain>
    </source>
</reference>
<reference key="2">
    <citation type="journal article" date="2000" name="Science">
        <title>The genome sequence of Drosophila melanogaster.</title>
        <authorList>
            <person name="Adams M.D."/>
            <person name="Celniker S.E."/>
            <person name="Holt R.A."/>
            <person name="Evans C.A."/>
            <person name="Gocayne J.D."/>
            <person name="Amanatides P.G."/>
            <person name="Scherer S.E."/>
            <person name="Li P.W."/>
            <person name="Hoskins R.A."/>
            <person name="Galle R.F."/>
            <person name="George R.A."/>
            <person name="Lewis S.E."/>
            <person name="Richards S."/>
            <person name="Ashburner M."/>
            <person name="Henderson S.N."/>
            <person name="Sutton G.G."/>
            <person name="Wortman J.R."/>
            <person name="Yandell M.D."/>
            <person name="Zhang Q."/>
            <person name="Chen L.X."/>
            <person name="Brandon R.C."/>
            <person name="Rogers Y.-H.C."/>
            <person name="Blazej R.G."/>
            <person name="Champe M."/>
            <person name="Pfeiffer B.D."/>
            <person name="Wan K.H."/>
            <person name="Doyle C."/>
            <person name="Baxter E.G."/>
            <person name="Helt G."/>
            <person name="Nelson C.R."/>
            <person name="Miklos G.L.G."/>
            <person name="Abril J.F."/>
            <person name="Agbayani A."/>
            <person name="An H.-J."/>
            <person name="Andrews-Pfannkoch C."/>
            <person name="Baldwin D."/>
            <person name="Ballew R.M."/>
            <person name="Basu A."/>
            <person name="Baxendale J."/>
            <person name="Bayraktaroglu L."/>
            <person name="Beasley E.M."/>
            <person name="Beeson K.Y."/>
            <person name="Benos P.V."/>
            <person name="Berman B.P."/>
            <person name="Bhandari D."/>
            <person name="Bolshakov S."/>
            <person name="Borkova D."/>
            <person name="Botchan M.R."/>
            <person name="Bouck J."/>
            <person name="Brokstein P."/>
            <person name="Brottier P."/>
            <person name="Burtis K.C."/>
            <person name="Busam D.A."/>
            <person name="Butler H."/>
            <person name="Cadieu E."/>
            <person name="Center A."/>
            <person name="Chandra I."/>
            <person name="Cherry J.M."/>
            <person name="Cawley S."/>
            <person name="Dahlke C."/>
            <person name="Davenport L.B."/>
            <person name="Davies P."/>
            <person name="de Pablos B."/>
            <person name="Delcher A."/>
            <person name="Deng Z."/>
            <person name="Mays A.D."/>
            <person name="Dew I."/>
            <person name="Dietz S.M."/>
            <person name="Dodson K."/>
            <person name="Doup L.E."/>
            <person name="Downes M."/>
            <person name="Dugan-Rocha S."/>
            <person name="Dunkov B.C."/>
            <person name="Dunn P."/>
            <person name="Durbin K.J."/>
            <person name="Evangelista C.C."/>
            <person name="Ferraz C."/>
            <person name="Ferriera S."/>
            <person name="Fleischmann W."/>
            <person name="Fosler C."/>
            <person name="Gabrielian A.E."/>
            <person name="Garg N.S."/>
            <person name="Gelbart W.M."/>
            <person name="Glasser K."/>
            <person name="Glodek A."/>
            <person name="Gong F."/>
            <person name="Gorrell J.H."/>
            <person name="Gu Z."/>
            <person name="Guan P."/>
            <person name="Harris M."/>
            <person name="Harris N.L."/>
            <person name="Harvey D.A."/>
            <person name="Heiman T.J."/>
            <person name="Hernandez J.R."/>
            <person name="Houck J."/>
            <person name="Hostin D."/>
            <person name="Houston K.A."/>
            <person name="Howland T.J."/>
            <person name="Wei M.-H."/>
            <person name="Ibegwam C."/>
            <person name="Jalali M."/>
            <person name="Kalush F."/>
            <person name="Karpen G.H."/>
            <person name="Ke Z."/>
            <person name="Kennison J.A."/>
            <person name="Ketchum K.A."/>
            <person name="Kimmel B.E."/>
            <person name="Kodira C.D."/>
            <person name="Kraft C.L."/>
            <person name="Kravitz S."/>
            <person name="Kulp D."/>
            <person name="Lai Z."/>
            <person name="Lasko P."/>
            <person name="Lei Y."/>
            <person name="Levitsky A.A."/>
            <person name="Li J.H."/>
            <person name="Li Z."/>
            <person name="Liang Y."/>
            <person name="Lin X."/>
            <person name="Liu X."/>
            <person name="Mattei B."/>
            <person name="McIntosh T.C."/>
            <person name="McLeod M.P."/>
            <person name="McPherson D."/>
            <person name="Merkulov G."/>
            <person name="Milshina N.V."/>
            <person name="Mobarry C."/>
            <person name="Morris J."/>
            <person name="Moshrefi A."/>
            <person name="Mount S.M."/>
            <person name="Moy M."/>
            <person name="Murphy B."/>
            <person name="Murphy L."/>
            <person name="Muzny D.M."/>
            <person name="Nelson D.L."/>
            <person name="Nelson D.R."/>
            <person name="Nelson K.A."/>
            <person name="Nixon K."/>
            <person name="Nusskern D.R."/>
            <person name="Pacleb J.M."/>
            <person name="Palazzolo M."/>
            <person name="Pittman G.S."/>
            <person name="Pan S."/>
            <person name="Pollard J."/>
            <person name="Puri V."/>
            <person name="Reese M.G."/>
            <person name="Reinert K."/>
            <person name="Remington K."/>
            <person name="Saunders R.D.C."/>
            <person name="Scheeler F."/>
            <person name="Shen H."/>
            <person name="Shue B.C."/>
            <person name="Siden-Kiamos I."/>
            <person name="Simpson M."/>
            <person name="Skupski M.P."/>
            <person name="Smith T.J."/>
            <person name="Spier E."/>
            <person name="Spradling A.C."/>
            <person name="Stapleton M."/>
            <person name="Strong R."/>
            <person name="Sun E."/>
            <person name="Svirskas R."/>
            <person name="Tector C."/>
            <person name="Turner R."/>
            <person name="Venter E."/>
            <person name="Wang A.H."/>
            <person name="Wang X."/>
            <person name="Wang Z.-Y."/>
            <person name="Wassarman D.A."/>
            <person name="Weinstock G.M."/>
            <person name="Weissenbach J."/>
            <person name="Williams S.M."/>
            <person name="Woodage T."/>
            <person name="Worley K.C."/>
            <person name="Wu D."/>
            <person name="Yang S."/>
            <person name="Yao Q.A."/>
            <person name="Ye J."/>
            <person name="Yeh R.-F."/>
            <person name="Zaveri J.S."/>
            <person name="Zhan M."/>
            <person name="Zhang G."/>
            <person name="Zhao Q."/>
            <person name="Zheng L."/>
            <person name="Zheng X.H."/>
            <person name="Zhong F.N."/>
            <person name="Zhong W."/>
            <person name="Zhou X."/>
            <person name="Zhu S.C."/>
            <person name="Zhu X."/>
            <person name="Smith H.O."/>
            <person name="Gibbs R.A."/>
            <person name="Myers E.W."/>
            <person name="Rubin G.M."/>
            <person name="Venter J.C."/>
        </authorList>
    </citation>
    <scope>NUCLEOTIDE SEQUENCE [LARGE SCALE GENOMIC DNA]</scope>
    <source>
        <strain>Berkeley</strain>
    </source>
</reference>
<reference key="3">
    <citation type="journal article" date="2002" name="Genome Biol.">
        <title>Annotation of the Drosophila melanogaster euchromatic genome: a systematic review.</title>
        <authorList>
            <person name="Misra S."/>
            <person name="Crosby M.A."/>
            <person name="Mungall C.J."/>
            <person name="Matthews B.B."/>
            <person name="Campbell K.S."/>
            <person name="Hradecky P."/>
            <person name="Huang Y."/>
            <person name="Kaminker J.S."/>
            <person name="Millburn G.H."/>
            <person name="Prochnik S.E."/>
            <person name="Smith C.D."/>
            <person name="Tupy J.L."/>
            <person name="Whitfield E.J."/>
            <person name="Bayraktaroglu L."/>
            <person name="Berman B.P."/>
            <person name="Bettencourt B.R."/>
            <person name="Celniker S.E."/>
            <person name="de Grey A.D.N.J."/>
            <person name="Drysdale R.A."/>
            <person name="Harris N.L."/>
            <person name="Richter J."/>
            <person name="Russo S."/>
            <person name="Schroeder A.J."/>
            <person name="Shu S.Q."/>
            <person name="Stapleton M."/>
            <person name="Yamada C."/>
            <person name="Ashburner M."/>
            <person name="Gelbart W.M."/>
            <person name="Rubin G.M."/>
            <person name="Lewis S.E."/>
        </authorList>
    </citation>
    <scope>GENOME REANNOTATION</scope>
    <source>
        <strain>Berkeley</strain>
    </source>
</reference>
<reference key="4">
    <citation type="journal article" date="2002" name="Genome Biol.">
        <title>A Drosophila full-length cDNA resource.</title>
        <authorList>
            <person name="Stapleton M."/>
            <person name="Carlson J.W."/>
            <person name="Brokstein P."/>
            <person name="Yu C."/>
            <person name="Champe M."/>
            <person name="George R.A."/>
            <person name="Guarin H."/>
            <person name="Kronmiller B."/>
            <person name="Pacleb J.M."/>
            <person name="Park S."/>
            <person name="Wan K.H."/>
            <person name="Rubin G.M."/>
            <person name="Celniker S.E."/>
        </authorList>
    </citation>
    <scope>NUCLEOTIDE SEQUENCE [LARGE SCALE MRNA]</scope>
    <source>
        <strain>Berkeley</strain>
        <tissue>Testis</tissue>
    </source>
</reference>
<proteinExistence type="evidence at transcript level"/>
<sequence>MSCPRSIEIPDGSWIDWFLGIKGHEFSCRVPNEYIQDKFNLTGLEFDSQTLEVVLDPEFDNEDWDCAEEKKLYGMIHARYIVSPRGIEDMRLKYERGDFGSCPRVFCKRQKVLPVGLHDVWDKAQVKIYCPSCNNVYIPLPHNGMLDGAMFGTSFPHMFFMQLPSLIPSPPVEKYIPRIYGFQLHKKALMPPESAESPPIKVESSVSKSPSWLRNVPNF</sequence>
<dbReference type="EMBL" id="L49382">
    <property type="protein sequence ID" value="AAB65817.1"/>
    <property type="molecule type" value="Genomic_DNA"/>
</dbReference>
<dbReference type="EMBL" id="L42285">
    <property type="protein sequence ID" value="AAB65818.1"/>
    <property type="molecule type" value="mRNA"/>
</dbReference>
<dbReference type="EMBL" id="AE013599">
    <property type="protein sequence ID" value="AAF47214.1"/>
    <property type="molecule type" value="Genomic_DNA"/>
</dbReference>
<dbReference type="EMBL" id="AY089437">
    <property type="protein sequence ID" value="AAL90175.1"/>
    <property type="molecule type" value="mRNA"/>
</dbReference>
<dbReference type="RefSeq" id="NP_523848.2">
    <property type="nucleotide sequence ID" value="NM_079124.3"/>
</dbReference>
<dbReference type="SMR" id="Q24536"/>
<dbReference type="BioGRID" id="63482">
    <property type="interactions" value="6"/>
</dbReference>
<dbReference type="FunCoup" id="Q24536">
    <property type="interactions" value="168"/>
</dbReference>
<dbReference type="IntAct" id="Q24536">
    <property type="interactions" value="1"/>
</dbReference>
<dbReference type="STRING" id="7227.FBpp0072258"/>
<dbReference type="PaxDb" id="7227-FBpp0072258"/>
<dbReference type="DNASU" id="37909"/>
<dbReference type="EnsemblMetazoa" id="FBtr0072351">
    <property type="protein sequence ID" value="FBpp0072258"/>
    <property type="gene ID" value="FBgn0015300"/>
</dbReference>
<dbReference type="GeneID" id="37909"/>
<dbReference type="KEGG" id="dme:Dmel_CG13591"/>
<dbReference type="AGR" id="FB:FBgn0015300"/>
<dbReference type="CTD" id="37909"/>
<dbReference type="FlyBase" id="FBgn0015300">
    <property type="gene designation" value="Ssl"/>
</dbReference>
<dbReference type="VEuPathDB" id="VectorBase:FBgn0015300"/>
<dbReference type="eggNOG" id="KOG3092">
    <property type="taxonomic scope" value="Eukaryota"/>
</dbReference>
<dbReference type="GeneTree" id="ENSGT00390000003781"/>
<dbReference type="HOGENOM" id="CLU_034027_3_3_1"/>
<dbReference type="InParanoid" id="Q24536"/>
<dbReference type="OMA" id="QPHARCA"/>
<dbReference type="OrthoDB" id="3971593at2759"/>
<dbReference type="PhylomeDB" id="Q24536"/>
<dbReference type="BioGRID-ORCS" id="37909">
    <property type="hits" value="0 hits in 3 CRISPR screens"/>
</dbReference>
<dbReference type="GenomeRNAi" id="37909"/>
<dbReference type="PRO" id="PR:Q24536"/>
<dbReference type="Proteomes" id="UP000000803">
    <property type="component" value="Chromosome 2R"/>
</dbReference>
<dbReference type="Bgee" id="FBgn0015300">
    <property type="expression patterns" value="Expressed in early-mid elongation-stage spermatid (Drosophila) in testis and 19 other cell types or tissues"/>
</dbReference>
<dbReference type="GO" id="GO:0005737">
    <property type="term" value="C:cytoplasm"/>
    <property type="evidence" value="ECO:0000318"/>
    <property type="project" value="GO_Central"/>
</dbReference>
<dbReference type="GO" id="GO:0005956">
    <property type="term" value="C:protein kinase CK2 complex"/>
    <property type="evidence" value="ECO:0000318"/>
    <property type="project" value="GO_Central"/>
</dbReference>
<dbReference type="GO" id="GO:0019887">
    <property type="term" value="F:protein kinase regulator activity"/>
    <property type="evidence" value="ECO:0000314"/>
    <property type="project" value="FlyBase"/>
</dbReference>
<dbReference type="FunFam" id="1.10.1820.10:FF:000005">
    <property type="entry name" value="Casein kinase II subunit beta"/>
    <property type="match status" value="1"/>
</dbReference>
<dbReference type="FunFam" id="2.20.25.20:FF:000001">
    <property type="entry name" value="Casein kinase II subunit beta"/>
    <property type="match status" value="1"/>
</dbReference>
<dbReference type="Gene3D" id="2.20.25.20">
    <property type="match status" value="1"/>
</dbReference>
<dbReference type="Gene3D" id="1.10.1820.10">
    <property type="entry name" value="protein kinase ck2 holoenzyme, chain C, domain 1"/>
    <property type="match status" value="1"/>
</dbReference>
<dbReference type="InterPro" id="IPR016149">
    <property type="entry name" value="Casein_kin_II_reg-sub_N"/>
</dbReference>
<dbReference type="InterPro" id="IPR035991">
    <property type="entry name" value="Casein_kinase_II_beta-like"/>
</dbReference>
<dbReference type="InterPro" id="IPR000704">
    <property type="entry name" value="Casein_kinase_II_reg-sub"/>
</dbReference>
<dbReference type="PANTHER" id="PTHR11740">
    <property type="entry name" value="CASEIN KINASE II SUBUNIT BETA"/>
    <property type="match status" value="1"/>
</dbReference>
<dbReference type="PANTHER" id="PTHR11740:SF0">
    <property type="entry name" value="CASEIN KINASE II SUBUNIT BETA"/>
    <property type="match status" value="1"/>
</dbReference>
<dbReference type="Pfam" id="PF01214">
    <property type="entry name" value="CK_II_beta"/>
    <property type="match status" value="1"/>
</dbReference>
<dbReference type="PRINTS" id="PR00472">
    <property type="entry name" value="CASNKINASEII"/>
</dbReference>
<dbReference type="SMART" id="SM01085">
    <property type="entry name" value="CK_II_beta"/>
    <property type="match status" value="1"/>
</dbReference>
<dbReference type="SUPFAM" id="SSF57798">
    <property type="entry name" value="Casein kinase II beta subunit"/>
    <property type="match status" value="1"/>
</dbReference>
<dbReference type="PROSITE" id="PS01101">
    <property type="entry name" value="CK2_BETA"/>
    <property type="match status" value="1"/>
</dbReference>